<feature type="chain" id="PRO_1000147877" description="Polyribonucleotide nucleotidyltransferase">
    <location>
        <begin position="1"/>
        <end position="715"/>
    </location>
</feature>
<feature type="domain" description="KH" evidence="1">
    <location>
        <begin position="552"/>
        <end position="611"/>
    </location>
</feature>
<feature type="domain" description="S1 motif" evidence="1">
    <location>
        <begin position="621"/>
        <end position="689"/>
    </location>
</feature>
<feature type="region of interest" description="Disordered" evidence="2">
    <location>
        <begin position="695"/>
        <end position="715"/>
    </location>
</feature>
<feature type="binding site" evidence="1">
    <location>
        <position position="485"/>
    </location>
    <ligand>
        <name>Mg(2+)</name>
        <dbReference type="ChEBI" id="CHEBI:18420"/>
    </ligand>
</feature>
<feature type="binding site" evidence="1">
    <location>
        <position position="491"/>
    </location>
    <ligand>
        <name>Mg(2+)</name>
        <dbReference type="ChEBI" id="CHEBI:18420"/>
    </ligand>
</feature>
<reference key="1">
    <citation type="journal article" date="2008" name="PLoS ONE">
        <title>Genome biology of Actinobacillus pleuropneumoniae JL03, an isolate of serotype 3 prevalent in China.</title>
        <authorList>
            <person name="Xu Z."/>
            <person name="Zhou Y."/>
            <person name="Li L."/>
            <person name="Zhou R."/>
            <person name="Xiao S."/>
            <person name="Wan Y."/>
            <person name="Zhang S."/>
            <person name="Wang K."/>
            <person name="Li W."/>
            <person name="Li L."/>
            <person name="Jin H."/>
            <person name="Kang M."/>
            <person name="Dalai B."/>
            <person name="Li T."/>
            <person name="Liu L."/>
            <person name="Cheng Y."/>
            <person name="Zhang L."/>
            <person name="Xu T."/>
            <person name="Zheng H."/>
            <person name="Pu S."/>
            <person name="Wang B."/>
            <person name="Gu W."/>
            <person name="Zhang X.L."/>
            <person name="Zhu G.-F."/>
            <person name="Wang S."/>
            <person name="Zhao G.-P."/>
            <person name="Chen H."/>
        </authorList>
    </citation>
    <scope>NUCLEOTIDE SEQUENCE [LARGE SCALE GENOMIC DNA]</scope>
    <source>
        <strain>JL03</strain>
    </source>
</reference>
<dbReference type="EC" id="2.7.7.8" evidence="1"/>
<dbReference type="EMBL" id="CP000687">
    <property type="protein sequence ID" value="ABY69140.1"/>
    <property type="molecule type" value="Genomic_DNA"/>
</dbReference>
<dbReference type="RefSeq" id="WP_012262862.1">
    <property type="nucleotide sequence ID" value="NC_010278.1"/>
</dbReference>
<dbReference type="SMR" id="B0BUD5"/>
<dbReference type="KEGG" id="apj:APJL_0570"/>
<dbReference type="HOGENOM" id="CLU_004217_2_2_6"/>
<dbReference type="Proteomes" id="UP000008547">
    <property type="component" value="Chromosome"/>
</dbReference>
<dbReference type="GO" id="GO:0005829">
    <property type="term" value="C:cytosol"/>
    <property type="evidence" value="ECO:0007669"/>
    <property type="project" value="TreeGrafter"/>
</dbReference>
<dbReference type="GO" id="GO:0000175">
    <property type="term" value="F:3'-5'-RNA exonuclease activity"/>
    <property type="evidence" value="ECO:0007669"/>
    <property type="project" value="TreeGrafter"/>
</dbReference>
<dbReference type="GO" id="GO:0000287">
    <property type="term" value="F:magnesium ion binding"/>
    <property type="evidence" value="ECO:0007669"/>
    <property type="project" value="UniProtKB-UniRule"/>
</dbReference>
<dbReference type="GO" id="GO:0004654">
    <property type="term" value="F:polyribonucleotide nucleotidyltransferase activity"/>
    <property type="evidence" value="ECO:0007669"/>
    <property type="project" value="UniProtKB-UniRule"/>
</dbReference>
<dbReference type="GO" id="GO:0003723">
    <property type="term" value="F:RNA binding"/>
    <property type="evidence" value="ECO:0007669"/>
    <property type="project" value="UniProtKB-UniRule"/>
</dbReference>
<dbReference type="GO" id="GO:0006402">
    <property type="term" value="P:mRNA catabolic process"/>
    <property type="evidence" value="ECO:0007669"/>
    <property type="project" value="UniProtKB-UniRule"/>
</dbReference>
<dbReference type="GO" id="GO:0006396">
    <property type="term" value="P:RNA processing"/>
    <property type="evidence" value="ECO:0007669"/>
    <property type="project" value="InterPro"/>
</dbReference>
<dbReference type="CDD" id="cd02393">
    <property type="entry name" value="KH-I_PNPase"/>
    <property type="match status" value="1"/>
</dbReference>
<dbReference type="CDD" id="cd11363">
    <property type="entry name" value="RNase_PH_PNPase_1"/>
    <property type="match status" value="1"/>
</dbReference>
<dbReference type="CDD" id="cd11364">
    <property type="entry name" value="RNase_PH_PNPase_2"/>
    <property type="match status" value="1"/>
</dbReference>
<dbReference type="CDD" id="cd04472">
    <property type="entry name" value="S1_PNPase"/>
    <property type="match status" value="1"/>
</dbReference>
<dbReference type="FunFam" id="2.40.50.140:FF:000023">
    <property type="entry name" value="Polyribonucleotide nucleotidyltransferase"/>
    <property type="match status" value="1"/>
</dbReference>
<dbReference type="FunFam" id="3.30.1370.10:FF:000001">
    <property type="entry name" value="Polyribonucleotide nucleotidyltransferase"/>
    <property type="match status" value="1"/>
</dbReference>
<dbReference type="FunFam" id="3.30.230.70:FF:000001">
    <property type="entry name" value="Polyribonucleotide nucleotidyltransferase"/>
    <property type="match status" value="1"/>
</dbReference>
<dbReference type="FunFam" id="3.30.230.70:FF:000002">
    <property type="entry name" value="Polyribonucleotide nucleotidyltransferase"/>
    <property type="match status" value="1"/>
</dbReference>
<dbReference type="Gene3D" id="3.30.230.70">
    <property type="entry name" value="GHMP Kinase, N-terminal domain"/>
    <property type="match status" value="2"/>
</dbReference>
<dbReference type="Gene3D" id="3.30.1370.10">
    <property type="entry name" value="K Homology domain, type 1"/>
    <property type="match status" value="1"/>
</dbReference>
<dbReference type="Gene3D" id="2.40.50.140">
    <property type="entry name" value="Nucleic acid-binding proteins"/>
    <property type="match status" value="1"/>
</dbReference>
<dbReference type="HAMAP" id="MF_01595">
    <property type="entry name" value="PNPase"/>
    <property type="match status" value="1"/>
</dbReference>
<dbReference type="InterPro" id="IPR001247">
    <property type="entry name" value="ExoRNase_PH_dom1"/>
</dbReference>
<dbReference type="InterPro" id="IPR015847">
    <property type="entry name" value="ExoRNase_PH_dom2"/>
</dbReference>
<dbReference type="InterPro" id="IPR036345">
    <property type="entry name" value="ExoRNase_PH_dom2_sf"/>
</dbReference>
<dbReference type="InterPro" id="IPR004087">
    <property type="entry name" value="KH_dom"/>
</dbReference>
<dbReference type="InterPro" id="IPR004088">
    <property type="entry name" value="KH_dom_type_1"/>
</dbReference>
<dbReference type="InterPro" id="IPR036612">
    <property type="entry name" value="KH_dom_type_1_sf"/>
</dbReference>
<dbReference type="InterPro" id="IPR012340">
    <property type="entry name" value="NA-bd_OB-fold"/>
</dbReference>
<dbReference type="InterPro" id="IPR012162">
    <property type="entry name" value="PNPase"/>
</dbReference>
<dbReference type="InterPro" id="IPR027408">
    <property type="entry name" value="PNPase/RNase_PH_dom_sf"/>
</dbReference>
<dbReference type="InterPro" id="IPR015848">
    <property type="entry name" value="PNPase_PH_RNA-bd_bac/org-type"/>
</dbReference>
<dbReference type="InterPro" id="IPR036456">
    <property type="entry name" value="PNPase_PH_RNA-bd_sf"/>
</dbReference>
<dbReference type="InterPro" id="IPR020568">
    <property type="entry name" value="Ribosomal_Su5_D2-typ_SF"/>
</dbReference>
<dbReference type="InterPro" id="IPR003029">
    <property type="entry name" value="S1_domain"/>
</dbReference>
<dbReference type="NCBIfam" id="TIGR03591">
    <property type="entry name" value="polynuc_phos"/>
    <property type="match status" value="1"/>
</dbReference>
<dbReference type="NCBIfam" id="NF008805">
    <property type="entry name" value="PRK11824.1"/>
    <property type="match status" value="1"/>
</dbReference>
<dbReference type="PANTHER" id="PTHR11252">
    <property type="entry name" value="POLYRIBONUCLEOTIDE NUCLEOTIDYLTRANSFERASE"/>
    <property type="match status" value="1"/>
</dbReference>
<dbReference type="PANTHER" id="PTHR11252:SF0">
    <property type="entry name" value="POLYRIBONUCLEOTIDE NUCLEOTIDYLTRANSFERASE 1, MITOCHONDRIAL"/>
    <property type="match status" value="1"/>
</dbReference>
<dbReference type="Pfam" id="PF00013">
    <property type="entry name" value="KH_1"/>
    <property type="match status" value="1"/>
</dbReference>
<dbReference type="Pfam" id="PF03726">
    <property type="entry name" value="PNPase"/>
    <property type="match status" value="1"/>
</dbReference>
<dbReference type="Pfam" id="PF01138">
    <property type="entry name" value="RNase_PH"/>
    <property type="match status" value="2"/>
</dbReference>
<dbReference type="Pfam" id="PF03725">
    <property type="entry name" value="RNase_PH_C"/>
    <property type="match status" value="2"/>
</dbReference>
<dbReference type="Pfam" id="PF00575">
    <property type="entry name" value="S1"/>
    <property type="match status" value="1"/>
</dbReference>
<dbReference type="PIRSF" id="PIRSF005499">
    <property type="entry name" value="PNPase"/>
    <property type="match status" value="1"/>
</dbReference>
<dbReference type="SMART" id="SM00322">
    <property type="entry name" value="KH"/>
    <property type="match status" value="1"/>
</dbReference>
<dbReference type="SMART" id="SM00316">
    <property type="entry name" value="S1"/>
    <property type="match status" value="1"/>
</dbReference>
<dbReference type="SUPFAM" id="SSF54791">
    <property type="entry name" value="Eukaryotic type KH-domain (KH-domain type I)"/>
    <property type="match status" value="1"/>
</dbReference>
<dbReference type="SUPFAM" id="SSF50249">
    <property type="entry name" value="Nucleic acid-binding proteins"/>
    <property type="match status" value="1"/>
</dbReference>
<dbReference type="SUPFAM" id="SSF46915">
    <property type="entry name" value="Polynucleotide phosphorylase/guanosine pentaphosphate synthase (PNPase/GPSI), domain 3"/>
    <property type="match status" value="1"/>
</dbReference>
<dbReference type="SUPFAM" id="SSF55666">
    <property type="entry name" value="Ribonuclease PH domain 2-like"/>
    <property type="match status" value="2"/>
</dbReference>
<dbReference type="SUPFAM" id="SSF54211">
    <property type="entry name" value="Ribosomal protein S5 domain 2-like"/>
    <property type="match status" value="2"/>
</dbReference>
<dbReference type="PROSITE" id="PS50084">
    <property type="entry name" value="KH_TYPE_1"/>
    <property type="match status" value="1"/>
</dbReference>
<dbReference type="PROSITE" id="PS50126">
    <property type="entry name" value="S1"/>
    <property type="match status" value="1"/>
</dbReference>
<accession>B0BUD5</accession>
<keyword id="KW-0963">Cytoplasm</keyword>
<keyword id="KW-0460">Magnesium</keyword>
<keyword id="KW-0479">Metal-binding</keyword>
<keyword id="KW-0548">Nucleotidyltransferase</keyword>
<keyword id="KW-0694">RNA-binding</keyword>
<keyword id="KW-0808">Transferase</keyword>
<proteinExistence type="inferred from homology"/>
<comment type="function">
    <text evidence="1">Involved in mRNA degradation. Catalyzes the phosphorolysis of single-stranded polyribonucleotides processively in the 3'- to 5'-direction.</text>
</comment>
<comment type="catalytic activity">
    <reaction evidence="1">
        <text>RNA(n+1) + phosphate = RNA(n) + a ribonucleoside 5'-diphosphate</text>
        <dbReference type="Rhea" id="RHEA:22096"/>
        <dbReference type="Rhea" id="RHEA-COMP:14527"/>
        <dbReference type="Rhea" id="RHEA-COMP:17342"/>
        <dbReference type="ChEBI" id="CHEBI:43474"/>
        <dbReference type="ChEBI" id="CHEBI:57930"/>
        <dbReference type="ChEBI" id="CHEBI:140395"/>
        <dbReference type="EC" id="2.7.7.8"/>
    </reaction>
</comment>
<comment type="cofactor">
    <cofactor evidence="1">
        <name>Mg(2+)</name>
        <dbReference type="ChEBI" id="CHEBI:18420"/>
    </cofactor>
</comment>
<comment type="subunit">
    <text evidence="1">Component of the RNA degradosome, which is a multiprotein complex involved in RNA processing and mRNA degradation.</text>
</comment>
<comment type="subcellular location">
    <subcellularLocation>
        <location evidence="1">Cytoplasm</location>
    </subcellularLocation>
</comment>
<comment type="similarity">
    <text evidence="1">Belongs to the polyribonucleotide nucleotidyltransferase family.</text>
</comment>
<sequence>MNPIVKQFKYGQHTVTLETGAIARQATAAVMASMDDTTVFVTVVAKKEVKEGQDFFPLTVDYQERTYAAGRIPGGFFKREGRPSEGETLIARLIDRPVRPLFPEGFFNEIQVIATVVSVNPQISPDLVAMIGASAALSLSGVPFNGPIGAARVGFINDQFVLNPTTSEQKISRLDLVVAGTDKAVLMVESEADILSEEQMLSAVVFGHQQQQVVIENIKEFVKEAGKPRWDWVAPEPNTALINQVKALAEARIGDAYRITEKQARYEQIDAIKADVIAQLTTQDETISEGAIIDIITALESSIVRGRIIAGEPRIDGRTVDTVRALDICTGVLPRTHGSAIFTRGETQALAVATLGTERDAQIIDELTGEKSDRFLFHYNFPPYSVGETGRIGSPKRREIGHGRLAKRGVLAVMPTAEEFPYVVRVVSEITESNGSSSMASVCGASLALMDAGVPIKAAVAGIAMGLVKEEEKFVVLSDILGDEDHLGDMDFKVAGTREGVTALQMDIKIEGITPEIMQIALNQAKGARMHILSVMEQAIPAPRADISDFAPRIHTMKIDPKKIKDVIGKGGAVIRALTEETGTSIDIDDDGTVKIAATDNNAAKAVMARIEDIVAEVEVNAIYKGKVTRVVDFGAFVSILGGKEGLVHISQITNERVERVADYLSVGQEVTVKVVEIDRQNRIRLTMKDLNNDTPVAENVTEEAEVSSEQQAEI</sequence>
<organism>
    <name type="scientific">Actinobacillus pleuropneumoniae serotype 3 (strain JL03)</name>
    <dbReference type="NCBI Taxonomy" id="434271"/>
    <lineage>
        <taxon>Bacteria</taxon>
        <taxon>Pseudomonadati</taxon>
        <taxon>Pseudomonadota</taxon>
        <taxon>Gammaproteobacteria</taxon>
        <taxon>Pasteurellales</taxon>
        <taxon>Pasteurellaceae</taxon>
        <taxon>Actinobacillus</taxon>
    </lineage>
</organism>
<gene>
    <name evidence="1" type="primary">pnp</name>
    <name type="ordered locus">APJL_0570</name>
</gene>
<name>PNP_ACTPJ</name>
<evidence type="ECO:0000255" key="1">
    <source>
        <dbReference type="HAMAP-Rule" id="MF_01595"/>
    </source>
</evidence>
<evidence type="ECO:0000256" key="2">
    <source>
        <dbReference type="SAM" id="MobiDB-lite"/>
    </source>
</evidence>
<protein>
    <recommendedName>
        <fullName evidence="1">Polyribonucleotide nucleotidyltransferase</fullName>
        <ecNumber evidence="1">2.7.7.8</ecNumber>
    </recommendedName>
    <alternativeName>
        <fullName evidence="1">Polynucleotide phosphorylase</fullName>
        <shortName evidence="1">PNPase</shortName>
    </alternativeName>
</protein>